<accession>O34601</accession>
<proteinExistence type="inferred from homology"/>
<gene>
    <name type="primary">ytjA</name>
    <name type="ordered locus">BSU30680</name>
</gene>
<dbReference type="EMBL" id="AF008220">
    <property type="protein sequence ID" value="AAC00372.1"/>
    <property type="molecule type" value="Genomic_DNA"/>
</dbReference>
<dbReference type="EMBL" id="AL009126">
    <property type="protein sequence ID" value="CAB15046.1"/>
    <property type="molecule type" value="Genomic_DNA"/>
</dbReference>
<dbReference type="PIR" id="H69993">
    <property type="entry name" value="H69993"/>
</dbReference>
<dbReference type="RefSeq" id="NP_390946.1">
    <property type="nucleotide sequence ID" value="NC_000964.3"/>
</dbReference>
<dbReference type="FunCoup" id="O34601">
    <property type="interactions" value="343"/>
</dbReference>
<dbReference type="STRING" id="224308.BSU30680"/>
<dbReference type="PaxDb" id="224308-BSU30680"/>
<dbReference type="DNASU" id="937207"/>
<dbReference type="EnsemblBacteria" id="CAB15046">
    <property type="protein sequence ID" value="CAB15046"/>
    <property type="gene ID" value="BSU_30680"/>
</dbReference>
<dbReference type="GeneID" id="937207"/>
<dbReference type="KEGG" id="bsu:BSU30680"/>
<dbReference type="PATRIC" id="fig|224308.179.peg.3326"/>
<dbReference type="eggNOG" id="COG0759">
    <property type="taxonomic scope" value="Bacteria"/>
</dbReference>
<dbReference type="InParanoid" id="O34601"/>
<dbReference type="OrthoDB" id="9801753at2"/>
<dbReference type="PhylomeDB" id="O34601"/>
<dbReference type="BioCyc" id="BSUB:BSU30680-MONOMER"/>
<dbReference type="Proteomes" id="UP000001570">
    <property type="component" value="Chromosome"/>
</dbReference>
<dbReference type="GO" id="GO:0005886">
    <property type="term" value="C:plasma membrane"/>
    <property type="evidence" value="ECO:0007669"/>
    <property type="project" value="UniProtKB-SubCell"/>
</dbReference>
<dbReference type="HAMAP" id="MF_00386">
    <property type="entry name" value="UPF0161_YidD"/>
    <property type="match status" value="1"/>
</dbReference>
<dbReference type="InterPro" id="IPR002696">
    <property type="entry name" value="Membr_insert_effic_factor_YidD"/>
</dbReference>
<dbReference type="NCBIfam" id="TIGR00278">
    <property type="entry name" value="membrane protein insertion efficiency factor YidD"/>
    <property type="match status" value="1"/>
</dbReference>
<dbReference type="PANTHER" id="PTHR33383">
    <property type="entry name" value="MEMBRANE PROTEIN INSERTION EFFICIENCY FACTOR-RELATED"/>
    <property type="match status" value="1"/>
</dbReference>
<dbReference type="PANTHER" id="PTHR33383:SF1">
    <property type="entry name" value="MEMBRANE PROTEIN INSERTION EFFICIENCY FACTOR-RELATED"/>
    <property type="match status" value="1"/>
</dbReference>
<dbReference type="Pfam" id="PF01809">
    <property type="entry name" value="YidD"/>
    <property type="match status" value="1"/>
</dbReference>
<dbReference type="SMART" id="SM01234">
    <property type="entry name" value="Haemolytic"/>
    <property type="match status" value="1"/>
</dbReference>
<sequence length="75" mass="8491">MKTLFIALIRGYQKFISPLTPPTCRFYPTCSQYGIEAIKTHGALKGGWLTIKRILKCHPFHPGGVDPVPEKKQKH</sequence>
<name>YIDD_BACSU</name>
<keyword id="KW-1003">Cell membrane</keyword>
<keyword id="KW-0472">Membrane</keyword>
<keyword id="KW-1185">Reference proteome</keyword>
<feature type="chain" id="PRO_0000171793" description="Putative membrane protein insertion efficiency factor">
    <location>
        <begin position="1"/>
        <end position="75"/>
    </location>
</feature>
<evidence type="ECO:0000255" key="1">
    <source>
        <dbReference type="HAMAP-Rule" id="MF_00386"/>
    </source>
</evidence>
<comment type="function">
    <text evidence="1">Could be involved in insertion of integral membrane proteins into the membrane.</text>
</comment>
<comment type="subcellular location">
    <subcellularLocation>
        <location evidence="1">Cell membrane</location>
        <topology evidence="1">Peripheral membrane protein</topology>
        <orientation evidence="1">Cytoplasmic side</orientation>
    </subcellularLocation>
</comment>
<comment type="similarity">
    <text evidence="1">Belongs to the UPF0161 family.</text>
</comment>
<organism>
    <name type="scientific">Bacillus subtilis (strain 168)</name>
    <dbReference type="NCBI Taxonomy" id="224308"/>
    <lineage>
        <taxon>Bacteria</taxon>
        <taxon>Bacillati</taxon>
        <taxon>Bacillota</taxon>
        <taxon>Bacilli</taxon>
        <taxon>Bacillales</taxon>
        <taxon>Bacillaceae</taxon>
        <taxon>Bacillus</taxon>
    </lineage>
</organism>
<reference key="1">
    <citation type="journal article" date="1997" name="Microbiology">
        <title>Sequencing and functional annotation of the Bacillus subtilis genes in the 200 kb rrnB-dnaB region.</title>
        <authorList>
            <person name="Lapidus A."/>
            <person name="Galleron N."/>
            <person name="Sorokin A."/>
            <person name="Ehrlich S.D."/>
        </authorList>
    </citation>
    <scope>NUCLEOTIDE SEQUENCE [GENOMIC DNA]</scope>
    <source>
        <strain>168</strain>
    </source>
</reference>
<reference key="2">
    <citation type="journal article" date="1997" name="Nature">
        <title>The complete genome sequence of the Gram-positive bacterium Bacillus subtilis.</title>
        <authorList>
            <person name="Kunst F."/>
            <person name="Ogasawara N."/>
            <person name="Moszer I."/>
            <person name="Albertini A.M."/>
            <person name="Alloni G."/>
            <person name="Azevedo V."/>
            <person name="Bertero M.G."/>
            <person name="Bessieres P."/>
            <person name="Bolotin A."/>
            <person name="Borchert S."/>
            <person name="Borriss R."/>
            <person name="Boursier L."/>
            <person name="Brans A."/>
            <person name="Braun M."/>
            <person name="Brignell S.C."/>
            <person name="Bron S."/>
            <person name="Brouillet S."/>
            <person name="Bruschi C.V."/>
            <person name="Caldwell B."/>
            <person name="Capuano V."/>
            <person name="Carter N.M."/>
            <person name="Choi S.-K."/>
            <person name="Codani J.-J."/>
            <person name="Connerton I.F."/>
            <person name="Cummings N.J."/>
            <person name="Daniel R.A."/>
            <person name="Denizot F."/>
            <person name="Devine K.M."/>
            <person name="Duesterhoeft A."/>
            <person name="Ehrlich S.D."/>
            <person name="Emmerson P.T."/>
            <person name="Entian K.-D."/>
            <person name="Errington J."/>
            <person name="Fabret C."/>
            <person name="Ferrari E."/>
            <person name="Foulger D."/>
            <person name="Fritz C."/>
            <person name="Fujita M."/>
            <person name="Fujita Y."/>
            <person name="Fuma S."/>
            <person name="Galizzi A."/>
            <person name="Galleron N."/>
            <person name="Ghim S.-Y."/>
            <person name="Glaser P."/>
            <person name="Goffeau A."/>
            <person name="Golightly E.J."/>
            <person name="Grandi G."/>
            <person name="Guiseppi G."/>
            <person name="Guy B.J."/>
            <person name="Haga K."/>
            <person name="Haiech J."/>
            <person name="Harwood C.R."/>
            <person name="Henaut A."/>
            <person name="Hilbert H."/>
            <person name="Holsappel S."/>
            <person name="Hosono S."/>
            <person name="Hullo M.-F."/>
            <person name="Itaya M."/>
            <person name="Jones L.-M."/>
            <person name="Joris B."/>
            <person name="Karamata D."/>
            <person name="Kasahara Y."/>
            <person name="Klaerr-Blanchard M."/>
            <person name="Klein C."/>
            <person name="Kobayashi Y."/>
            <person name="Koetter P."/>
            <person name="Koningstein G."/>
            <person name="Krogh S."/>
            <person name="Kumano M."/>
            <person name="Kurita K."/>
            <person name="Lapidus A."/>
            <person name="Lardinois S."/>
            <person name="Lauber J."/>
            <person name="Lazarevic V."/>
            <person name="Lee S.-M."/>
            <person name="Levine A."/>
            <person name="Liu H."/>
            <person name="Masuda S."/>
            <person name="Mauel C."/>
            <person name="Medigue C."/>
            <person name="Medina N."/>
            <person name="Mellado R.P."/>
            <person name="Mizuno M."/>
            <person name="Moestl D."/>
            <person name="Nakai S."/>
            <person name="Noback M."/>
            <person name="Noone D."/>
            <person name="O'Reilly M."/>
            <person name="Ogawa K."/>
            <person name="Ogiwara A."/>
            <person name="Oudega B."/>
            <person name="Park S.-H."/>
            <person name="Parro V."/>
            <person name="Pohl T.M."/>
            <person name="Portetelle D."/>
            <person name="Porwollik S."/>
            <person name="Prescott A.M."/>
            <person name="Presecan E."/>
            <person name="Pujic P."/>
            <person name="Purnelle B."/>
            <person name="Rapoport G."/>
            <person name="Rey M."/>
            <person name="Reynolds S."/>
            <person name="Rieger M."/>
            <person name="Rivolta C."/>
            <person name="Rocha E."/>
            <person name="Roche B."/>
            <person name="Rose M."/>
            <person name="Sadaie Y."/>
            <person name="Sato T."/>
            <person name="Scanlan E."/>
            <person name="Schleich S."/>
            <person name="Schroeter R."/>
            <person name="Scoffone F."/>
            <person name="Sekiguchi J."/>
            <person name="Sekowska A."/>
            <person name="Seror S.J."/>
            <person name="Serror P."/>
            <person name="Shin B.-S."/>
            <person name="Soldo B."/>
            <person name="Sorokin A."/>
            <person name="Tacconi E."/>
            <person name="Takagi T."/>
            <person name="Takahashi H."/>
            <person name="Takemaru K."/>
            <person name="Takeuchi M."/>
            <person name="Tamakoshi A."/>
            <person name="Tanaka T."/>
            <person name="Terpstra P."/>
            <person name="Tognoni A."/>
            <person name="Tosato V."/>
            <person name="Uchiyama S."/>
            <person name="Vandenbol M."/>
            <person name="Vannier F."/>
            <person name="Vassarotti A."/>
            <person name="Viari A."/>
            <person name="Wambutt R."/>
            <person name="Wedler E."/>
            <person name="Wedler H."/>
            <person name="Weitzenegger T."/>
            <person name="Winters P."/>
            <person name="Wipat A."/>
            <person name="Yamamoto H."/>
            <person name="Yamane K."/>
            <person name="Yasumoto K."/>
            <person name="Yata K."/>
            <person name="Yoshida K."/>
            <person name="Yoshikawa H.-F."/>
            <person name="Zumstein E."/>
            <person name="Yoshikawa H."/>
            <person name="Danchin A."/>
        </authorList>
    </citation>
    <scope>NUCLEOTIDE SEQUENCE [LARGE SCALE GENOMIC DNA]</scope>
    <source>
        <strain>168</strain>
    </source>
</reference>
<protein>
    <recommendedName>
        <fullName evidence="1">Putative membrane protein insertion efficiency factor</fullName>
    </recommendedName>
</protein>